<feature type="chain" id="PRO_1000069635" description="Purine nucleoside phosphorylase DeoD-type">
    <location>
        <begin position="1"/>
        <end position="233"/>
    </location>
</feature>
<feature type="active site" description="Proton donor" evidence="2">
    <location>
        <position position="204"/>
    </location>
</feature>
<feature type="binding site" evidence="1">
    <location>
        <position position="4"/>
    </location>
    <ligand>
        <name>a purine D-ribonucleoside</name>
        <dbReference type="ChEBI" id="CHEBI:142355"/>
        <note>ligand shared between dimeric partners</note>
    </ligand>
</feature>
<feature type="binding site" description="in other chain" evidence="1">
    <location>
        <position position="20"/>
    </location>
    <ligand>
        <name>phosphate</name>
        <dbReference type="ChEBI" id="CHEBI:43474"/>
        <note>ligand shared between dimeric partners</note>
    </ligand>
</feature>
<feature type="binding site" description="in other chain" evidence="1">
    <location>
        <position position="24"/>
    </location>
    <ligand>
        <name>phosphate</name>
        <dbReference type="ChEBI" id="CHEBI:43474"/>
        <note>ligand shared between dimeric partners</note>
    </ligand>
</feature>
<feature type="binding site" evidence="1">
    <location>
        <position position="43"/>
    </location>
    <ligand>
        <name>phosphate</name>
        <dbReference type="ChEBI" id="CHEBI:43474"/>
        <note>ligand shared between dimeric partners</note>
    </ligand>
</feature>
<feature type="binding site" description="in other chain" evidence="1">
    <location>
        <begin position="87"/>
        <end position="90"/>
    </location>
    <ligand>
        <name>phosphate</name>
        <dbReference type="ChEBI" id="CHEBI:43474"/>
        <note>ligand shared between dimeric partners</note>
    </ligand>
</feature>
<feature type="binding site" description="in other chain" evidence="1">
    <location>
        <begin position="179"/>
        <end position="181"/>
    </location>
    <ligand>
        <name>a purine D-ribonucleoside</name>
        <dbReference type="ChEBI" id="CHEBI:142355"/>
        <note>ligand shared between dimeric partners</note>
    </ligand>
</feature>
<feature type="binding site" description="in other chain" evidence="1">
    <location>
        <begin position="203"/>
        <end position="204"/>
    </location>
    <ligand>
        <name>a purine D-ribonucleoside</name>
        <dbReference type="ChEBI" id="CHEBI:142355"/>
        <note>ligand shared between dimeric partners</note>
    </ligand>
</feature>
<feature type="site" description="Important for catalytic activity" evidence="2">
    <location>
        <position position="217"/>
    </location>
</feature>
<reference key="1">
    <citation type="journal article" date="2006" name="Proc. Natl. Acad. Sci. U.S.A.">
        <title>The complete genome sequence of a chronic atrophic gastritis Helicobacter pylori strain: evolution during disease progression.</title>
        <authorList>
            <person name="Oh J.D."/>
            <person name="Kling-Baeckhed H."/>
            <person name="Giannakis M."/>
            <person name="Xu J."/>
            <person name="Fulton R.S."/>
            <person name="Fulton L.A."/>
            <person name="Cordum H.S."/>
            <person name="Wang C."/>
            <person name="Elliott G."/>
            <person name="Edwards J."/>
            <person name="Mardis E.R."/>
            <person name="Engstrand L.G."/>
            <person name="Gordon J.I."/>
        </authorList>
    </citation>
    <scope>NUCLEOTIDE SEQUENCE [LARGE SCALE GENOMIC DNA]</scope>
    <source>
        <strain>HPAG1</strain>
    </source>
</reference>
<organism>
    <name type="scientific">Helicobacter pylori (strain HPAG1)</name>
    <dbReference type="NCBI Taxonomy" id="357544"/>
    <lineage>
        <taxon>Bacteria</taxon>
        <taxon>Pseudomonadati</taxon>
        <taxon>Campylobacterota</taxon>
        <taxon>Epsilonproteobacteria</taxon>
        <taxon>Campylobacterales</taxon>
        <taxon>Helicobacteraceae</taxon>
        <taxon>Helicobacter</taxon>
    </lineage>
</organism>
<gene>
    <name evidence="2" type="primary">deoD</name>
    <name type="ordered locus">HPAG1_1117</name>
</gene>
<keyword id="KW-0328">Glycosyltransferase</keyword>
<keyword id="KW-0808">Transferase</keyword>
<comment type="function">
    <text evidence="2">Catalyzes the reversible phosphorolytic breakdown of the N-glycosidic bond in the beta-(deoxy)ribonucleoside molecules, with the formation of the corresponding free purine bases and pentose-1-phosphate.</text>
</comment>
<comment type="catalytic activity">
    <reaction evidence="2">
        <text>a purine D-ribonucleoside + phosphate = a purine nucleobase + alpha-D-ribose 1-phosphate</text>
        <dbReference type="Rhea" id="RHEA:19805"/>
        <dbReference type="ChEBI" id="CHEBI:26386"/>
        <dbReference type="ChEBI" id="CHEBI:43474"/>
        <dbReference type="ChEBI" id="CHEBI:57720"/>
        <dbReference type="ChEBI" id="CHEBI:142355"/>
        <dbReference type="EC" id="2.4.2.1"/>
    </reaction>
</comment>
<comment type="catalytic activity">
    <reaction evidence="2">
        <text>a purine 2'-deoxy-D-ribonucleoside + phosphate = a purine nucleobase + 2-deoxy-alpha-D-ribose 1-phosphate</text>
        <dbReference type="Rhea" id="RHEA:36431"/>
        <dbReference type="ChEBI" id="CHEBI:26386"/>
        <dbReference type="ChEBI" id="CHEBI:43474"/>
        <dbReference type="ChEBI" id="CHEBI:57259"/>
        <dbReference type="ChEBI" id="CHEBI:142361"/>
        <dbReference type="EC" id="2.4.2.1"/>
    </reaction>
</comment>
<comment type="subunit">
    <text evidence="2">Homohexamer; trimer of homodimers.</text>
</comment>
<comment type="similarity">
    <text evidence="2">Belongs to the PNP/UDP phosphorylase family.</text>
</comment>
<accession>Q1CS88</accession>
<name>DEOD_HELPH</name>
<dbReference type="EC" id="2.4.2.1" evidence="2"/>
<dbReference type="EMBL" id="CP000241">
    <property type="protein sequence ID" value="ABF85184.1"/>
    <property type="molecule type" value="Genomic_DNA"/>
</dbReference>
<dbReference type="RefSeq" id="WP_000187684.1">
    <property type="nucleotide sequence ID" value="NC_008086.1"/>
</dbReference>
<dbReference type="SMR" id="Q1CS88"/>
<dbReference type="KEGG" id="hpa:HPAG1_1117"/>
<dbReference type="HOGENOM" id="CLU_068457_2_0_7"/>
<dbReference type="GO" id="GO:0005829">
    <property type="term" value="C:cytosol"/>
    <property type="evidence" value="ECO:0007669"/>
    <property type="project" value="TreeGrafter"/>
</dbReference>
<dbReference type="GO" id="GO:0004731">
    <property type="term" value="F:purine-nucleoside phosphorylase activity"/>
    <property type="evidence" value="ECO:0007669"/>
    <property type="project" value="UniProtKB-EC"/>
</dbReference>
<dbReference type="GO" id="GO:0006152">
    <property type="term" value="P:purine nucleoside catabolic process"/>
    <property type="evidence" value="ECO:0007669"/>
    <property type="project" value="TreeGrafter"/>
</dbReference>
<dbReference type="CDD" id="cd09006">
    <property type="entry name" value="PNP_EcPNPI-like"/>
    <property type="match status" value="1"/>
</dbReference>
<dbReference type="Gene3D" id="3.40.50.1580">
    <property type="entry name" value="Nucleoside phosphorylase domain"/>
    <property type="match status" value="1"/>
</dbReference>
<dbReference type="HAMAP" id="MF_01627">
    <property type="entry name" value="Pur_nucleosid_phosp"/>
    <property type="match status" value="1"/>
</dbReference>
<dbReference type="InterPro" id="IPR004402">
    <property type="entry name" value="DeoD-type"/>
</dbReference>
<dbReference type="InterPro" id="IPR018016">
    <property type="entry name" value="Nucleoside_phosphorylase_CS"/>
</dbReference>
<dbReference type="InterPro" id="IPR000845">
    <property type="entry name" value="Nucleoside_phosphorylase_d"/>
</dbReference>
<dbReference type="InterPro" id="IPR035994">
    <property type="entry name" value="Nucleoside_phosphorylase_sf"/>
</dbReference>
<dbReference type="NCBIfam" id="TIGR00107">
    <property type="entry name" value="deoD"/>
    <property type="match status" value="1"/>
</dbReference>
<dbReference type="NCBIfam" id="NF004489">
    <property type="entry name" value="PRK05819.1"/>
    <property type="match status" value="1"/>
</dbReference>
<dbReference type="PANTHER" id="PTHR43691:SF11">
    <property type="entry name" value="FI09636P-RELATED"/>
    <property type="match status" value="1"/>
</dbReference>
<dbReference type="PANTHER" id="PTHR43691">
    <property type="entry name" value="URIDINE PHOSPHORYLASE"/>
    <property type="match status" value="1"/>
</dbReference>
<dbReference type="Pfam" id="PF01048">
    <property type="entry name" value="PNP_UDP_1"/>
    <property type="match status" value="1"/>
</dbReference>
<dbReference type="SUPFAM" id="SSF53167">
    <property type="entry name" value="Purine and uridine phosphorylases"/>
    <property type="match status" value="1"/>
</dbReference>
<dbReference type="PROSITE" id="PS01232">
    <property type="entry name" value="PNP_UDP_1"/>
    <property type="match status" value="1"/>
</dbReference>
<evidence type="ECO:0000250" key="1">
    <source>
        <dbReference type="UniProtKB" id="P50389"/>
    </source>
</evidence>
<evidence type="ECO:0000255" key="2">
    <source>
        <dbReference type="HAMAP-Rule" id="MF_01627"/>
    </source>
</evidence>
<sequence>MTPHINAKIGDFYPQCLLCGDPLRVSYIAKKFLQDAKEITNVRNMLGFSGKYKGKGISLMGHGMGIASCTIYVTELIKTYQVKELLRIGTCGAISPKVGLKDIIMAMGASTDSKTNRVRFLNHDLSATPDFELSLRAYQTAKRLGIDLKVGNVFSSDFFYSFETHAFDLMAQYNHLAIEMEAAGLYATAMELSAKALCLCSVSDHLITKEALSPKERVESFDNMIILALEMMS</sequence>
<proteinExistence type="inferred from homology"/>
<protein>
    <recommendedName>
        <fullName evidence="2">Purine nucleoside phosphorylase DeoD-type</fullName>
        <shortName evidence="2">PNP</shortName>
        <ecNumber evidence="2">2.4.2.1</ecNumber>
    </recommendedName>
</protein>